<proteinExistence type="evidence at protein level"/>
<organism>
    <name type="scientific">Bacillus subtilis (strain 168)</name>
    <dbReference type="NCBI Taxonomy" id="224308"/>
    <lineage>
        <taxon>Bacteria</taxon>
        <taxon>Bacillati</taxon>
        <taxon>Bacillota</taxon>
        <taxon>Bacilli</taxon>
        <taxon>Bacillales</taxon>
        <taxon>Bacillaceae</taxon>
        <taxon>Bacillus</taxon>
    </lineage>
</organism>
<evidence type="ECO:0000250" key="1"/>
<evidence type="ECO:0000255" key="2">
    <source>
        <dbReference type="PROSITE-ProRule" id="PRU00560"/>
    </source>
</evidence>
<evidence type="ECO:0000255" key="3">
    <source>
        <dbReference type="PROSITE-ProRule" id="PRU00617"/>
    </source>
</evidence>
<evidence type="ECO:0000256" key="4">
    <source>
        <dbReference type="SAM" id="MobiDB-lite"/>
    </source>
</evidence>
<evidence type="ECO:0000305" key="5"/>
<protein>
    <recommendedName>
        <fullName>Putative ATP-dependent DNA helicase YjcD</fullName>
        <ecNumber>5.6.2.4</ecNumber>
    </recommendedName>
    <alternativeName>
        <fullName evidence="5">DNA 3'-5' helicase YjcD</fullName>
    </alternativeName>
</protein>
<dbReference type="EC" id="5.6.2.4"/>
<dbReference type="EMBL" id="AL009126">
    <property type="protein sequence ID" value="CAB13039.3"/>
    <property type="molecule type" value="Genomic_DNA"/>
</dbReference>
<dbReference type="PIR" id="D69846">
    <property type="entry name" value="D69846"/>
</dbReference>
<dbReference type="RefSeq" id="NP_389064.3">
    <property type="nucleotide sequence ID" value="NC_000964.3"/>
</dbReference>
<dbReference type="RefSeq" id="WP_003245380.1">
    <property type="nucleotide sequence ID" value="NZ_OZ025638.1"/>
</dbReference>
<dbReference type="SMR" id="O31626"/>
<dbReference type="FunCoup" id="O31626">
    <property type="interactions" value="251"/>
</dbReference>
<dbReference type="STRING" id="224308.BSU11820"/>
<dbReference type="PaxDb" id="224308-BSU11820"/>
<dbReference type="EnsemblBacteria" id="CAB13039">
    <property type="protein sequence ID" value="CAB13039"/>
    <property type="gene ID" value="BSU_11820"/>
</dbReference>
<dbReference type="GeneID" id="939813"/>
<dbReference type="KEGG" id="bsu:BSU11820"/>
<dbReference type="PATRIC" id="fig|224308.179.peg.1273"/>
<dbReference type="eggNOG" id="COG0210">
    <property type="taxonomic scope" value="Bacteria"/>
</dbReference>
<dbReference type="InParanoid" id="O31626"/>
<dbReference type="OrthoDB" id="9810135at2"/>
<dbReference type="BioCyc" id="BSUB:BSU11820-MONOMER"/>
<dbReference type="Proteomes" id="UP000001570">
    <property type="component" value="Chromosome"/>
</dbReference>
<dbReference type="GO" id="GO:0005829">
    <property type="term" value="C:cytosol"/>
    <property type="evidence" value="ECO:0000318"/>
    <property type="project" value="GO_Central"/>
</dbReference>
<dbReference type="GO" id="GO:0033202">
    <property type="term" value="C:DNA helicase complex"/>
    <property type="evidence" value="ECO:0000318"/>
    <property type="project" value="GO_Central"/>
</dbReference>
<dbReference type="GO" id="GO:0043138">
    <property type="term" value="F:3'-5' DNA helicase activity"/>
    <property type="evidence" value="ECO:0000318"/>
    <property type="project" value="GO_Central"/>
</dbReference>
<dbReference type="GO" id="GO:0005524">
    <property type="term" value="F:ATP binding"/>
    <property type="evidence" value="ECO:0007669"/>
    <property type="project" value="UniProtKB-KW"/>
</dbReference>
<dbReference type="GO" id="GO:0016887">
    <property type="term" value="F:ATP hydrolysis activity"/>
    <property type="evidence" value="ECO:0007669"/>
    <property type="project" value="RHEA"/>
</dbReference>
<dbReference type="GO" id="GO:0003677">
    <property type="term" value="F:DNA binding"/>
    <property type="evidence" value="ECO:0007669"/>
    <property type="project" value="UniProtKB-KW"/>
</dbReference>
<dbReference type="GO" id="GO:0000725">
    <property type="term" value="P:recombinational repair"/>
    <property type="evidence" value="ECO:0000318"/>
    <property type="project" value="GO_Central"/>
</dbReference>
<dbReference type="CDD" id="cd17932">
    <property type="entry name" value="DEXQc_UvrD"/>
    <property type="match status" value="1"/>
</dbReference>
<dbReference type="CDD" id="cd18807">
    <property type="entry name" value="SF1_C_UvrD"/>
    <property type="match status" value="1"/>
</dbReference>
<dbReference type="Gene3D" id="1.10.10.160">
    <property type="match status" value="1"/>
</dbReference>
<dbReference type="Gene3D" id="3.40.50.300">
    <property type="entry name" value="P-loop containing nucleotide triphosphate hydrolases"/>
    <property type="match status" value="2"/>
</dbReference>
<dbReference type="Gene3D" id="1.10.486.10">
    <property type="entry name" value="PCRA, domain 4"/>
    <property type="match status" value="1"/>
</dbReference>
<dbReference type="InterPro" id="IPR013986">
    <property type="entry name" value="DExx_box_DNA_helicase_dom_sf"/>
</dbReference>
<dbReference type="InterPro" id="IPR014017">
    <property type="entry name" value="DNA_helicase_UvrD-like_C"/>
</dbReference>
<dbReference type="InterPro" id="IPR000212">
    <property type="entry name" value="DNA_helicase_UvrD/REP"/>
</dbReference>
<dbReference type="InterPro" id="IPR027417">
    <property type="entry name" value="P-loop_NTPase"/>
</dbReference>
<dbReference type="InterPro" id="IPR014016">
    <property type="entry name" value="UvrD-like_ATP-bd"/>
</dbReference>
<dbReference type="PANTHER" id="PTHR11070:SF2">
    <property type="entry name" value="ATP-DEPENDENT DNA HELICASE SRS2"/>
    <property type="match status" value="1"/>
</dbReference>
<dbReference type="PANTHER" id="PTHR11070">
    <property type="entry name" value="UVRD / RECB / PCRA DNA HELICASE FAMILY MEMBER"/>
    <property type="match status" value="1"/>
</dbReference>
<dbReference type="Pfam" id="PF00580">
    <property type="entry name" value="UvrD-helicase"/>
    <property type="match status" value="1"/>
</dbReference>
<dbReference type="Pfam" id="PF13361">
    <property type="entry name" value="UvrD_C"/>
    <property type="match status" value="2"/>
</dbReference>
<dbReference type="SUPFAM" id="SSF52540">
    <property type="entry name" value="P-loop containing nucleoside triphosphate hydrolases"/>
    <property type="match status" value="1"/>
</dbReference>
<dbReference type="PROSITE" id="PS51198">
    <property type="entry name" value="UVRD_HELICASE_ATP_BIND"/>
    <property type="match status" value="1"/>
</dbReference>
<dbReference type="PROSITE" id="PS51217">
    <property type="entry name" value="UVRD_HELICASE_CTER"/>
    <property type="match status" value="1"/>
</dbReference>
<name>YJCD_BACSU</name>
<reference key="1">
    <citation type="journal article" date="1997" name="Nature">
        <title>The complete genome sequence of the Gram-positive bacterium Bacillus subtilis.</title>
        <authorList>
            <person name="Kunst F."/>
            <person name="Ogasawara N."/>
            <person name="Moszer I."/>
            <person name="Albertini A.M."/>
            <person name="Alloni G."/>
            <person name="Azevedo V."/>
            <person name="Bertero M.G."/>
            <person name="Bessieres P."/>
            <person name="Bolotin A."/>
            <person name="Borchert S."/>
            <person name="Borriss R."/>
            <person name="Boursier L."/>
            <person name="Brans A."/>
            <person name="Braun M."/>
            <person name="Brignell S.C."/>
            <person name="Bron S."/>
            <person name="Brouillet S."/>
            <person name="Bruschi C.V."/>
            <person name="Caldwell B."/>
            <person name="Capuano V."/>
            <person name="Carter N.M."/>
            <person name="Choi S.-K."/>
            <person name="Codani J.-J."/>
            <person name="Connerton I.F."/>
            <person name="Cummings N.J."/>
            <person name="Daniel R.A."/>
            <person name="Denizot F."/>
            <person name="Devine K.M."/>
            <person name="Duesterhoeft A."/>
            <person name="Ehrlich S.D."/>
            <person name="Emmerson P.T."/>
            <person name="Entian K.-D."/>
            <person name="Errington J."/>
            <person name="Fabret C."/>
            <person name="Ferrari E."/>
            <person name="Foulger D."/>
            <person name="Fritz C."/>
            <person name="Fujita M."/>
            <person name="Fujita Y."/>
            <person name="Fuma S."/>
            <person name="Galizzi A."/>
            <person name="Galleron N."/>
            <person name="Ghim S.-Y."/>
            <person name="Glaser P."/>
            <person name="Goffeau A."/>
            <person name="Golightly E.J."/>
            <person name="Grandi G."/>
            <person name="Guiseppi G."/>
            <person name="Guy B.J."/>
            <person name="Haga K."/>
            <person name="Haiech J."/>
            <person name="Harwood C.R."/>
            <person name="Henaut A."/>
            <person name="Hilbert H."/>
            <person name="Holsappel S."/>
            <person name="Hosono S."/>
            <person name="Hullo M.-F."/>
            <person name="Itaya M."/>
            <person name="Jones L.-M."/>
            <person name="Joris B."/>
            <person name="Karamata D."/>
            <person name="Kasahara Y."/>
            <person name="Klaerr-Blanchard M."/>
            <person name="Klein C."/>
            <person name="Kobayashi Y."/>
            <person name="Koetter P."/>
            <person name="Koningstein G."/>
            <person name="Krogh S."/>
            <person name="Kumano M."/>
            <person name="Kurita K."/>
            <person name="Lapidus A."/>
            <person name="Lardinois S."/>
            <person name="Lauber J."/>
            <person name="Lazarevic V."/>
            <person name="Lee S.-M."/>
            <person name="Levine A."/>
            <person name="Liu H."/>
            <person name="Masuda S."/>
            <person name="Mauel C."/>
            <person name="Medigue C."/>
            <person name="Medina N."/>
            <person name="Mellado R.P."/>
            <person name="Mizuno M."/>
            <person name="Moestl D."/>
            <person name="Nakai S."/>
            <person name="Noback M."/>
            <person name="Noone D."/>
            <person name="O'Reilly M."/>
            <person name="Ogawa K."/>
            <person name="Ogiwara A."/>
            <person name="Oudega B."/>
            <person name="Park S.-H."/>
            <person name="Parro V."/>
            <person name="Pohl T.M."/>
            <person name="Portetelle D."/>
            <person name="Porwollik S."/>
            <person name="Prescott A.M."/>
            <person name="Presecan E."/>
            <person name="Pujic P."/>
            <person name="Purnelle B."/>
            <person name="Rapoport G."/>
            <person name="Rey M."/>
            <person name="Reynolds S."/>
            <person name="Rieger M."/>
            <person name="Rivolta C."/>
            <person name="Rocha E."/>
            <person name="Roche B."/>
            <person name="Rose M."/>
            <person name="Sadaie Y."/>
            <person name="Sato T."/>
            <person name="Scanlan E."/>
            <person name="Schleich S."/>
            <person name="Schroeter R."/>
            <person name="Scoffone F."/>
            <person name="Sekiguchi J."/>
            <person name="Sekowska A."/>
            <person name="Seror S.J."/>
            <person name="Serror P."/>
            <person name="Shin B.-S."/>
            <person name="Soldo B."/>
            <person name="Sorokin A."/>
            <person name="Tacconi E."/>
            <person name="Takagi T."/>
            <person name="Takahashi H."/>
            <person name="Takemaru K."/>
            <person name="Takeuchi M."/>
            <person name="Tamakoshi A."/>
            <person name="Tanaka T."/>
            <person name="Terpstra P."/>
            <person name="Tognoni A."/>
            <person name="Tosato V."/>
            <person name="Uchiyama S."/>
            <person name="Vandenbol M."/>
            <person name="Vannier F."/>
            <person name="Vassarotti A."/>
            <person name="Viari A."/>
            <person name="Wambutt R."/>
            <person name="Wedler E."/>
            <person name="Wedler H."/>
            <person name="Weitzenegger T."/>
            <person name="Winters P."/>
            <person name="Wipat A."/>
            <person name="Yamamoto H."/>
            <person name="Yamane K."/>
            <person name="Yasumoto K."/>
            <person name="Yata K."/>
            <person name="Yoshida K."/>
            <person name="Yoshikawa H.-F."/>
            <person name="Zumstein E."/>
            <person name="Yoshikawa H."/>
            <person name="Danchin A."/>
        </authorList>
    </citation>
    <scope>NUCLEOTIDE SEQUENCE [LARGE SCALE GENOMIC DNA]</scope>
    <source>
        <strain>168</strain>
    </source>
</reference>
<reference key="2">
    <citation type="journal article" date="2001" name="J. Bacteriol.">
        <title>Genetic recombination in Bacillus subtilis 168: effect of delta helD on DNA repair and homologous recombination.</title>
        <authorList>
            <person name="Carrasco B."/>
            <person name="Fernandez S."/>
            <person name="Petit M.-A."/>
            <person name="Alonso J.C."/>
        </authorList>
    </citation>
    <scope>POSSIBLE FUNCTION AS HELICASE</scope>
    <source>
        <strain>168 / YB886 / BG214</strain>
    </source>
</reference>
<gene>
    <name type="primary">yjcD</name>
    <name type="ordered locus">BSU11820</name>
</gene>
<comment type="function">
    <text>May be involved in the generation of recombinogenic substrates for the subsequent action of RecA.</text>
</comment>
<comment type="catalytic activity">
    <reaction>
        <text>Couples ATP hydrolysis with the unwinding of duplex DNA by translocating in the 3'-5' direction.</text>
        <dbReference type="EC" id="5.6.2.4"/>
    </reaction>
</comment>
<comment type="catalytic activity">
    <reaction>
        <text>ATP + H2O = ADP + phosphate + H(+)</text>
        <dbReference type="Rhea" id="RHEA:13065"/>
        <dbReference type="ChEBI" id="CHEBI:15377"/>
        <dbReference type="ChEBI" id="CHEBI:15378"/>
        <dbReference type="ChEBI" id="CHEBI:30616"/>
        <dbReference type="ChEBI" id="CHEBI:43474"/>
        <dbReference type="ChEBI" id="CHEBI:456216"/>
        <dbReference type="EC" id="5.6.2.4"/>
    </reaction>
</comment>
<comment type="subcellular location">
    <subcellularLocation>
        <location evidence="5">Cytoplasm</location>
    </subcellularLocation>
</comment>
<comment type="similarity">
    <text evidence="5">Belongs to the helicase family. UvrD subfamily.</text>
</comment>
<keyword id="KW-0067">ATP-binding</keyword>
<keyword id="KW-0963">Cytoplasm</keyword>
<keyword id="KW-0238">DNA-binding</keyword>
<keyword id="KW-0347">Helicase</keyword>
<keyword id="KW-0378">Hydrolase</keyword>
<keyword id="KW-0413">Isomerase</keyword>
<keyword id="KW-0547">Nucleotide-binding</keyword>
<keyword id="KW-1185">Reference proteome</keyword>
<sequence length="759" mass="86976">MKCARLNDRIIHLHTYSREHYQFLFEEGIKGHLFCSHCGKPVLLRLNIADPPEFIHRQPGDFPACEEACEPKPSKEGKKEDDQESGVIRLPKGKAIAADPSPAVTEWHRPRSIKPGTPFVPKTIEPDTSLFPSVGLNTDQLKAVTETEGPLLVLAGAGSGKTRVLTARAAHMIEHLGIPPENMLLVTFTTKAVAEMKERMANQYGLQPAKVRRIVTGTFHSLFYKILYHSNSAKWNGEHLLKMEWQREQYIKKALYEEGIDEKESPVDQALQQIGFWKNTYVPNERIPLKDEWEKQVYRLYEHYERQKKEHSQFDFDDMASACYELFIERPDLLEQYQSRFTYILIDEFQDINPVQYKIMQMLASPEQNLCCVGDDDQSIYAFRGSNPSFILDFQKDYPGAKTIYLTANYRSTHPIVSSADIVVKKNKNRYAKTLEAARDDIQVPVLFYPYDEEEEATMVVSDIKEKIQNGASPEDFAVLYRTNSGGRAIYERLHQSSIPYTADRGVQSFYSRRIVRQILAYLYASQNEDDTEAIKHLLPALFLKQSALNTLKALSITEDCTMIKALAKLPDLKPFQLDKIKKIVPFFASLRTMKPVEAITFAEGKMGFSEYLKKRGNEGNKLEKGSDDLRDIKVVAKKFKTIPDFLAHVDHMRAAEKNRTDEHGVQLMTIHRSKGLEFKTVYVLGTVDGSIPHDFSLETARKGDEAALEEERRLLYVAMTRAKQHLYLSCPANRRGKTANRSRFLYPLLQKARQPLHH</sequence>
<feature type="chain" id="PRO_0000361274" description="Putative ATP-dependent DNA helicase YjcD">
    <location>
        <begin position="1"/>
        <end position="759"/>
    </location>
</feature>
<feature type="domain" description="UvrD-like helicase ATP-binding" evidence="2">
    <location>
        <begin position="134"/>
        <end position="413"/>
    </location>
</feature>
<feature type="domain" description="UvrD-like helicase C-terminal" evidence="3">
    <location>
        <begin position="414"/>
        <end position="676"/>
    </location>
</feature>
<feature type="region of interest" description="Disordered" evidence="4">
    <location>
        <begin position="68"/>
        <end position="121"/>
    </location>
</feature>
<feature type="compositionally biased region" description="Basic and acidic residues" evidence="4">
    <location>
        <begin position="69"/>
        <end position="81"/>
    </location>
</feature>
<feature type="binding site" evidence="2">
    <location>
        <begin position="158"/>
        <end position="163"/>
    </location>
    <ligand>
        <name>ATP</name>
        <dbReference type="ChEBI" id="CHEBI:30616"/>
    </ligand>
</feature>
<feature type="binding site" evidence="1">
    <location>
        <position position="411"/>
    </location>
    <ligand>
        <name>ATP</name>
        <dbReference type="ChEBI" id="CHEBI:30616"/>
    </ligand>
</feature>
<accession>O31626</accession>